<proteinExistence type="evidence at protein level"/>
<dbReference type="EMBL" id="AF269167">
    <property type="protein sequence ID" value="AAG01408.1"/>
    <property type="status" value="ALT_FRAME"/>
    <property type="molecule type" value="mRNA"/>
</dbReference>
<dbReference type="EMBL" id="AY517557">
    <property type="protein sequence ID" value="AAT44530.1"/>
    <property type="molecule type" value="mRNA"/>
</dbReference>
<dbReference type="EMBL" id="AK074227">
    <property type="protein sequence ID" value="BAB85022.1"/>
    <property type="status" value="ALT_INIT"/>
    <property type="molecule type" value="mRNA"/>
</dbReference>
<dbReference type="EMBL" id="AK000371">
    <property type="protein sequence ID" value="BAA91119.1"/>
    <property type="status" value="ALT_FRAME"/>
    <property type="molecule type" value="mRNA"/>
</dbReference>
<dbReference type="EMBL" id="AK304623">
    <property type="protein sequence ID" value="BAG65405.1"/>
    <property type="molecule type" value="mRNA"/>
</dbReference>
<dbReference type="EMBL" id="AC008680">
    <property type="status" value="NOT_ANNOTATED_CDS"/>
    <property type="molecule type" value="Genomic_DNA"/>
</dbReference>
<dbReference type="EMBL" id="BC012568">
    <property type="protein sequence ID" value="AAH12568.1"/>
    <property type="molecule type" value="mRNA"/>
</dbReference>
<dbReference type="CCDS" id="CCDS4370.1">
    <molecule id="Q96EA4-1"/>
</dbReference>
<dbReference type="RefSeq" id="NP_001316570.1">
    <molecule id="Q96EA4-1"/>
    <property type="nucleotide sequence ID" value="NM_001329641.2"/>
</dbReference>
<dbReference type="RefSeq" id="NP_060255.3">
    <molecule id="Q96EA4-1"/>
    <property type="nucleotide sequence ID" value="NM_017785.4"/>
</dbReference>
<dbReference type="RefSeq" id="XP_047273300.1">
    <molecule id="Q96EA4-1"/>
    <property type="nucleotide sequence ID" value="XM_047417344.1"/>
</dbReference>
<dbReference type="RefSeq" id="XP_047273301.1">
    <molecule id="Q96EA4-1"/>
    <property type="nucleotide sequence ID" value="XM_047417345.1"/>
</dbReference>
<dbReference type="RefSeq" id="XP_047273302.1">
    <molecule id="Q96EA4-1"/>
    <property type="nucleotide sequence ID" value="XM_047417346.1"/>
</dbReference>
<dbReference type="PDB" id="8ARF">
    <property type="method" value="X-ray"/>
    <property type="resolution" value="2.80 A"/>
    <property type="chains" value="A/B=1-100"/>
</dbReference>
<dbReference type="PDBsum" id="8ARF"/>
<dbReference type="SMR" id="Q96EA4"/>
<dbReference type="BioGRID" id="120253">
    <property type="interactions" value="319"/>
</dbReference>
<dbReference type="CORUM" id="Q96EA4"/>
<dbReference type="DIP" id="DIP-47296N"/>
<dbReference type="FunCoup" id="Q96EA4">
    <property type="interactions" value="2291"/>
</dbReference>
<dbReference type="IntAct" id="Q96EA4">
    <property type="interactions" value="62"/>
</dbReference>
<dbReference type="MINT" id="Q96EA4"/>
<dbReference type="STRING" id="9606.ENSP00000265295"/>
<dbReference type="iPTMnet" id="Q96EA4"/>
<dbReference type="PhosphoSitePlus" id="Q96EA4"/>
<dbReference type="BioMuta" id="SPDL1"/>
<dbReference type="DMDM" id="296452913"/>
<dbReference type="jPOST" id="Q96EA4"/>
<dbReference type="MassIVE" id="Q96EA4"/>
<dbReference type="PaxDb" id="9606-ENSP00000265295"/>
<dbReference type="PeptideAtlas" id="Q96EA4"/>
<dbReference type="ProteomicsDB" id="5884"/>
<dbReference type="ProteomicsDB" id="76388">
    <molecule id="Q96EA4-1"/>
</dbReference>
<dbReference type="ProteomicsDB" id="76389">
    <molecule id="Q96EA4-2"/>
</dbReference>
<dbReference type="Pumba" id="Q96EA4"/>
<dbReference type="Antibodypedia" id="28760">
    <property type="antibodies" value="235 antibodies from 30 providers"/>
</dbReference>
<dbReference type="DNASU" id="54908"/>
<dbReference type="Ensembl" id="ENST00000265295.9">
    <molecule id="Q96EA4-1"/>
    <property type="protein sequence ID" value="ENSP00000265295.4"/>
    <property type="gene ID" value="ENSG00000040275.17"/>
</dbReference>
<dbReference type="GeneID" id="54908"/>
<dbReference type="KEGG" id="hsa:54908"/>
<dbReference type="MANE-Select" id="ENST00000265295.9">
    <property type="protein sequence ID" value="ENSP00000265295.4"/>
    <property type="RefSeq nucleotide sequence ID" value="NM_017785.5"/>
    <property type="RefSeq protein sequence ID" value="NP_060255.3"/>
</dbReference>
<dbReference type="UCSC" id="uc003mae.5">
    <molecule id="Q96EA4-1"/>
    <property type="organism name" value="human"/>
</dbReference>
<dbReference type="AGR" id="HGNC:26010"/>
<dbReference type="CTD" id="54908"/>
<dbReference type="DisGeNET" id="54908"/>
<dbReference type="GeneCards" id="SPDL1"/>
<dbReference type="HGNC" id="HGNC:26010">
    <property type="gene designation" value="SPDL1"/>
</dbReference>
<dbReference type="HPA" id="ENSG00000040275">
    <property type="expression patterns" value="Tissue enhanced (testis)"/>
</dbReference>
<dbReference type="MalaCards" id="SPDL1"/>
<dbReference type="MIM" id="616401">
    <property type="type" value="gene"/>
</dbReference>
<dbReference type="neXtProt" id="NX_Q96EA4"/>
<dbReference type="OpenTargets" id="ENSG00000040275"/>
<dbReference type="PharmGKB" id="PA144596466"/>
<dbReference type="VEuPathDB" id="HostDB:ENSG00000040275"/>
<dbReference type="eggNOG" id="ENOG502S27G">
    <property type="taxonomic scope" value="Eukaryota"/>
</dbReference>
<dbReference type="GeneTree" id="ENSGT00510000047951"/>
<dbReference type="HOGENOM" id="CLU_031713_0_0_1"/>
<dbReference type="InParanoid" id="Q96EA4"/>
<dbReference type="OMA" id="KQHAFTK"/>
<dbReference type="OrthoDB" id="2121607at2759"/>
<dbReference type="PAN-GO" id="Q96EA4">
    <property type="GO annotations" value="6 GO annotations based on evolutionary models"/>
</dbReference>
<dbReference type="PhylomeDB" id="Q96EA4"/>
<dbReference type="TreeFam" id="TF332470"/>
<dbReference type="PathwayCommons" id="Q96EA4"/>
<dbReference type="Reactome" id="R-HSA-141444">
    <property type="pathway name" value="Amplification of signal from unattached kinetochores via a MAD2 inhibitory signal"/>
</dbReference>
<dbReference type="Reactome" id="R-HSA-2467813">
    <property type="pathway name" value="Separation of Sister Chromatids"/>
</dbReference>
<dbReference type="Reactome" id="R-HSA-2500257">
    <property type="pathway name" value="Resolution of Sister Chromatid Cohesion"/>
</dbReference>
<dbReference type="Reactome" id="R-HSA-5663220">
    <property type="pathway name" value="RHO GTPases Activate Formins"/>
</dbReference>
<dbReference type="Reactome" id="R-HSA-68877">
    <property type="pathway name" value="Mitotic Prometaphase"/>
</dbReference>
<dbReference type="Reactome" id="R-HSA-9648025">
    <property type="pathway name" value="EML4 and NUDC in mitotic spindle formation"/>
</dbReference>
<dbReference type="SignaLink" id="Q96EA4"/>
<dbReference type="SIGNOR" id="Q96EA4"/>
<dbReference type="BioGRID-ORCS" id="54908">
    <property type="hits" value="784 hits in 1170 CRISPR screens"/>
</dbReference>
<dbReference type="CD-CODE" id="8C2F96ED">
    <property type="entry name" value="Centrosome"/>
</dbReference>
<dbReference type="ChiTaRS" id="SPDL1">
    <property type="organism name" value="human"/>
</dbReference>
<dbReference type="GenomeRNAi" id="54908"/>
<dbReference type="Pharos" id="Q96EA4">
    <property type="development level" value="Tbio"/>
</dbReference>
<dbReference type="PRO" id="PR:Q96EA4"/>
<dbReference type="Proteomes" id="UP000005640">
    <property type="component" value="Chromosome 5"/>
</dbReference>
<dbReference type="RNAct" id="Q96EA4">
    <property type="molecule type" value="protein"/>
</dbReference>
<dbReference type="Bgee" id="ENSG00000040275">
    <property type="expression patterns" value="Expressed in secondary oocyte and 147 other cell types or tissues"/>
</dbReference>
<dbReference type="ExpressionAtlas" id="Q96EA4">
    <property type="expression patterns" value="baseline and differential"/>
</dbReference>
<dbReference type="GO" id="GO:0005813">
    <property type="term" value="C:centrosome"/>
    <property type="evidence" value="ECO:0007669"/>
    <property type="project" value="UniProtKB-SubCell"/>
</dbReference>
<dbReference type="GO" id="GO:0005829">
    <property type="term" value="C:cytosol"/>
    <property type="evidence" value="ECO:0000304"/>
    <property type="project" value="Reactome"/>
</dbReference>
<dbReference type="GO" id="GO:0005634">
    <property type="term" value="C:nucleus"/>
    <property type="evidence" value="ECO:0000314"/>
    <property type="project" value="UniProtKB"/>
</dbReference>
<dbReference type="GO" id="GO:0000940">
    <property type="term" value="C:outer kinetochore"/>
    <property type="evidence" value="ECO:0000314"/>
    <property type="project" value="UniProtKB"/>
</dbReference>
<dbReference type="GO" id="GO:0000922">
    <property type="term" value="C:spindle pole"/>
    <property type="evidence" value="ECO:0000314"/>
    <property type="project" value="UniProtKB"/>
</dbReference>
<dbReference type="GO" id="GO:0019899">
    <property type="term" value="F:enzyme binding"/>
    <property type="evidence" value="ECO:0000353"/>
    <property type="project" value="UniProtKB"/>
</dbReference>
<dbReference type="GO" id="GO:0043515">
    <property type="term" value="F:kinetochore binding"/>
    <property type="evidence" value="ECO:0000314"/>
    <property type="project" value="UniProtKB"/>
</dbReference>
<dbReference type="GO" id="GO:0051301">
    <property type="term" value="P:cell division"/>
    <property type="evidence" value="ECO:0007669"/>
    <property type="project" value="UniProtKB-KW"/>
</dbReference>
<dbReference type="GO" id="GO:0016477">
    <property type="term" value="P:cell migration"/>
    <property type="evidence" value="ECO:0000315"/>
    <property type="project" value="UniProtKB"/>
</dbReference>
<dbReference type="GO" id="GO:0000132">
    <property type="term" value="P:establishment of mitotic spindle orientation"/>
    <property type="evidence" value="ECO:0000315"/>
    <property type="project" value="UniProtKB"/>
</dbReference>
<dbReference type="GO" id="GO:0007080">
    <property type="term" value="P:mitotic metaphase chromosome alignment"/>
    <property type="evidence" value="ECO:0000315"/>
    <property type="project" value="UniProtKB"/>
</dbReference>
<dbReference type="GO" id="GO:0007094">
    <property type="term" value="P:mitotic spindle assembly checkpoint signaling"/>
    <property type="evidence" value="ECO:0007669"/>
    <property type="project" value="InterPro"/>
</dbReference>
<dbReference type="GO" id="GO:0034501">
    <property type="term" value="P:protein localization to kinetochore"/>
    <property type="evidence" value="ECO:0000315"/>
    <property type="project" value="UniProtKB"/>
</dbReference>
<dbReference type="HAMAP" id="MF_03041">
    <property type="entry name" value="SPDLY"/>
    <property type="match status" value="1"/>
</dbReference>
<dbReference type="InterPro" id="IPR028593">
    <property type="entry name" value="SPDLY_chordates"/>
</dbReference>
<dbReference type="InterPro" id="IPR051149">
    <property type="entry name" value="Spindly/BICDR_Dynein_Adapter"/>
</dbReference>
<dbReference type="PANTHER" id="PTHR32123">
    <property type="entry name" value="BICD FAMILY-LIKE CARGO ADAPTER"/>
    <property type="match status" value="1"/>
</dbReference>
<dbReference type="PANTHER" id="PTHR32123:SF9">
    <property type="entry name" value="PROTEIN SPINDLY"/>
    <property type="match status" value="1"/>
</dbReference>
<evidence type="ECO:0000250" key="1">
    <source>
        <dbReference type="UniProtKB" id="Q923A2"/>
    </source>
</evidence>
<evidence type="ECO:0000255" key="2">
    <source>
        <dbReference type="HAMAP-Rule" id="MF_03041"/>
    </source>
</evidence>
<evidence type="ECO:0000256" key="3">
    <source>
        <dbReference type="SAM" id="MobiDB-lite"/>
    </source>
</evidence>
<evidence type="ECO:0000269" key="4">
    <source>
    </source>
</evidence>
<evidence type="ECO:0000269" key="5">
    <source>
    </source>
</evidence>
<evidence type="ECO:0000269" key="6">
    <source>
    </source>
</evidence>
<evidence type="ECO:0000269" key="7">
    <source>
    </source>
</evidence>
<evidence type="ECO:0000269" key="8">
    <source>
    </source>
</evidence>
<evidence type="ECO:0000269" key="9">
    <source>
    </source>
</evidence>
<evidence type="ECO:0000269" key="10">
    <source ref="1"/>
</evidence>
<evidence type="ECO:0000269" key="11">
    <source ref="2"/>
</evidence>
<evidence type="ECO:0000303" key="12">
    <source>
    </source>
</evidence>
<evidence type="ECO:0000303" key="13">
    <source ref="1"/>
</evidence>
<evidence type="ECO:0000305" key="14"/>
<evidence type="ECO:0007744" key="15">
    <source>
    </source>
</evidence>
<evidence type="ECO:0007744" key="16">
    <source>
    </source>
</evidence>
<evidence type="ECO:0007744" key="17">
    <source>
    </source>
</evidence>
<evidence type="ECO:0007744" key="18">
    <source>
    </source>
</evidence>
<evidence type="ECO:0007744" key="19">
    <source>
    </source>
</evidence>
<evidence type="ECO:0007744" key="20">
    <source>
    </source>
</evidence>
<evidence type="ECO:0007829" key="21">
    <source>
        <dbReference type="PDB" id="8ARF"/>
    </source>
</evidence>
<name>SPDLY_HUMAN</name>
<feature type="chain" id="PRO_0000274516" description="Protein Spindly">
    <location>
        <begin position="1"/>
        <end position="605"/>
    </location>
</feature>
<feature type="region of interest" description="Disordered" evidence="3">
    <location>
        <begin position="544"/>
        <end position="580"/>
    </location>
</feature>
<feature type="coiled-coil region" evidence="2">
    <location>
        <begin position="2"/>
        <end position="442"/>
    </location>
</feature>
<feature type="compositionally biased region" description="Basic and acidic residues" evidence="3">
    <location>
        <begin position="564"/>
        <end position="580"/>
    </location>
</feature>
<feature type="modified residue" description="N-acetylmethionine" evidence="19">
    <location>
        <position position="1"/>
    </location>
</feature>
<feature type="modified residue" description="Phosphoserine" evidence="17 20">
    <location>
        <position position="513"/>
    </location>
</feature>
<feature type="modified residue" description="Phosphoserine" evidence="17 20">
    <location>
        <position position="515"/>
    </location>
</feature>
<feature type="modified residue" description="Phosphoserine" evidence="1">
    <location>
        <position position="555"/>
    </location>
</feature>
<feature type="splice variant" id="VSP_054244" description="In isoform 3." evidence="12">
    <location>
        <begin position="105"/>
        <end position="182"/>
    </location>
</feature>
<feature type="splice variant" id="VSP_022777" description="In isoform 2." evidence="13">
    <location>
        <begin position="178"/>
        <end position="276"/>
    </location>
</feature>
<feature type="sequence variant" id="VAR_030307" description="In dbSNP:rs3797713." evidence="4 5 10 11 15 16 17 18 20">
    <original>Y</original>
    <variation>H</variation>
    <location>
        <position position="508"/>
    </location>
</feature>
<feature type="sequence variant" id="VAR_030308" description="In dbSNP:rs3777084." evidence="4 5 10 11">
    <original>L</original>
    <variation>S</variation>
    <location>
        <position position="586"/>
    </location>
</feature>
<feature type="sequence conflict" description="In Ref. 1; AAG01408." evidence="14" ref="1">
    <original>M</original>
    <variation>I</variation>
    <location>
        <position position="89"/>
    </location>
</feature>
<feature type="sequence conflict" description="In Ref. 3; BAB85022." evidence="14" ref="3">
    <original>N</original>
    <variation>H</variation>
    <location>
        <position position="107"/>
    </location>
</feature>
<feature type="sequence conflict" description="In Ref. 3; BAB85022." evidence="14" ref="3">
    <original>E</original>
    <variation>G</variation>
    <location>
        <position position="329"/>
    </location>
</feature>
<feature type="helix" evidence="21">
    <location>
        <begin position="3"/>
        <end position="97"/>
    </location>
</feature>
<comment type="function">
    <text evidence="2 6 7 8 9">Required for the localization of dynein and dynactin to the mitotic kintochore. Dynein is believed to control the initial lateral interaction between the kinetochore and spindle microtubules and to facilitate the subsequent formation of end-on kinetochore-microtubule attachments mediated by the NDC80 complex. Also required for correct spindle orientation. Does not appear to be required for the removal of spindle assembly checkpoint (SAC) proteins from the kinetochore upon bipolar spindle attachment (PubMed:17576797, PubMed:19468067). Acts as an adapter protein linking the dynein motor complex to various cargos and converts dynein from a non-processive to a highly processive motor in the presence of dynactin. Facilitates the interaction between dynein and dynactin and activates dynein processivity (the ability to move along a microtubule for a long distance without falling off the track) (PubMed:25035494). Plays a role in cell migration (PubMed:30258100).</text>
</comment>
<comment type="subunit">
    <text evidence="2 7 8 9">Interacts with KNTC1 and ZW10. These interactions appear weak and may be transient or indirect (PubMed:19468067). Interacts with dynein intermediate chain and dynactin (DCTN1) (PubMed:25035494). Interacts with the catalytically active form of USP45 (PubMed:30258100).</text>
</comment>
<comment type="interaction">
    <interactant intactId="EBI-715381">
        <id>Q96EA4</id>
    </interactant>
    <interactant intactId="EBI-718700">
        <id>P35219</id>
        <label>CA8</label>
    </interactant>
    <organismsDiffer>false</organismsDiffer>
    <experiments>6</experiments>
</comment>
<comment type="interaction">
    <interactant intactId="EBI-715381">
        <id>Q96EA4</id>
    </interactant>
    <interactant intactId="EBI-2946907">
        <id>Q8WXU2</id>
        <label>DNAAF4</label>
    </interactant>
    <organismsDiffer>false</organismsDiffer>
    <experiments>3</experiments>
</comment>
<comment type="interaction">
    <interactant intactId="EBI-715381">
        <id>Q96EA4</id>
    </interactant>
    <interactant intactId="EBI-9381887">
        <id>Q8WXU2-2</id>
        <label>DNAAF4</label>
    </interactant>
    <organismsDiffer>false</organismsDiffer>
    <experiments>3</experiments>
</comment>
<comment type="interaction">
    <interactant intactId="EBI-715381">
        <id>Q96EA4</id>
    </interactant>
    <interactant intactId="EBI-2557469">
        <id>Q6NYC8</id>
        <label>PPP1R18</label>
    </interactant>
    <organismsDiffer>false</organismsDiffer>
    <experiments>3</experiments>
</comment>
<comment type="interaction">
    <interactant intactId="EBI-715381">
        <id>Q96EA4</id>
    </interactant>
    <interactant intactId="EBI-10217913">
        <id>Q14D33</id>
        <label>RTP5</label>
    </interactant>
    <organismsDiffer>false</organismsDiffer>
    <experiments>3</experiments>
</comment>
<comment type="interaction">
    <interactant intactId="EBI-715381">
        <id>Q96EA4</id>
    </interactant>
    <interactant intactId="EBI-3650647">
        <id>Q9BUZ4</id>
        <label>TRAF4</label>
    </interactant>
    <organismsDiffer>false</organismsDiffer>
    <experiments>3</experiments>
</comment>
<comment type="interaction">
    <interactant intactId="EBI-715381">
        <id>Q96EA4</id>
    </interactant>
    <interactant intactId="EBI-1043104">
        <id>Q9Y4E8</id>
        <label>USP15</label>
    </interactant>
    <organismsDiffer>false</organismsDiffer>
    <experiments>4</experiments>
</comment>
<comment type="subcellular location">
    <subcellularLocation>
        <location>Cytoplasm</location>
        <location>Cytoskeleton</location>
        <location>Microtubule organizing center</location>
        <location>Centrosome</location>
    </subcellularLocation>
    <subcellularLocation>
        <location>Chromosome</location>
        <location>Centromere</location>
        <location>Kinetochore</location>
    </subcellularLocation>
    <subcellularLocation>
        <location>Nucleus</location>
    </subcellularLocation>
    <subcellularLocation>
        <location>Cytoplasm</location>
        <location>Cytoskeleton</location>
        <location>Spindle pole</location>
    </subcellularLocation>
    <text>Localizes to the nucleus in interphase and to the kinetochore in early prometaphase. Relocalizes to the mitotic spindle pole before metaphase and is subsequently lost from the spindle poles after chromosome congression is completed. Removal of this protein from the kinetochore requires the dynein/dynactin complex.</text>
</comment>
<comment type="alternative products">
    <event type="alternative splicing"/>
    <isoform>
        <id>Q96EA4-1</id>
        <name>1</name>
        <sequence type="displayed"/>
    </isoform>
    <isoform>
        <id>Q96EA4-2</id>
        <name>2</name>
        <sequence type="described" ref="VSP_022777"/>
    </isoform>
    <isoform>
        <id>Q96EA4-3</id>
        <name>3</name>
        <sequence type="described" ref="VSP_054244"/>
    </isoform>
</comment>
<comment type="PTM">
    <text evidence="9">Monoubiquitinated with'Lys-48' linkage (PubMed:30258100). Deubiquitinated by USP45 (PubMed:30258100).</text>
</comment>
<comment type="similarity">
    <text evidence="2">Belongs to the Spindly family.</text>
</comment>
<comment type="sequence caution" evidence="14">
    <conflict type="frameshift">
        <sequence resource="EMBL-CDS" id="AAG01408"/>
    </conflict>
</comment>
<comment type="sequence caution" evidence="14">
    <conflict type="frameshift">
        <sequence resource="EMBL-CDS" id="BAA91119"/>
    </conflict>
</comment>
<comment type="sequence caution" evidence="14">
    <conflict type="erroneous initiation">
        <sequence resource="EMBL-CDS" id="BAB85022"/>
    </conflict>
    <text>Truncated N-terminus.</text>
</comment>
<sequence>MEADIITNLRCRLKEAEEERLKAAQYGLQLVESQNELQNQLDKCRNEMMTMTESYEQEKYTLQREVELKSRMLESLSCECEAIKQQQKMHLEKLEEQLSRSHGQEVNELKTKIEKLKVELDEARLSEKQLKHQVDHQKELLSCKSEELRVMSERVQESMSSEMLALQIELTEMESMKTTLKEEVNELQYRQEQLELLITNLMRQVDRLKEEKEEREKEAVSYYNALEKARVANQDLQVQLDQALQQALDPNSKGNSLFAEVEDRRAAMERQLISMKVKYQSLKKQNVFNREQMQRMKLQIATLLQMKGSQTEFEQQERLLAMLEQKNGEIKHLLGEIRNLEKFKNLYDSMESKPSVDSGTLEDNTYYTDLLQMKLDNLNKEIESTKGELSIQRMKALFESQRALDIERKLFANERCLQLSESENMKLRAKLDELKLKYEPEETVEVPVLKKRREVLPVDITTAKDACVNNSALGGEVYRLPPQKEETQSCPNSLEDNNLQLEKSVSIYTPVVSLSPHKNLPVDMQLKKEKKCVKLIGVPADAEALSERSGNTPNSPRLAAESKLQTEVKEGKETSSKLEKETCKKLHPILYVSSKSTPETQCPQQ</sequence>
<accession>Q96EA4</accession>
<accession>B4E393</accession>
<accession>C9JS47</accession>
<accession>Q8TEC8</accession>
<accession>Q9HD44</accession>
<accession>Q9NX97</accession>
<reference key="1">
    <citation type="submission" date="2000-05" db="EMBL/GenBank/DDBJ databases">
        <title>Cloning a novel human cDNA having elevated expression when induced with arsenite.</title>
        <authorList>
            <person name="Gu Y.Q."/>
            <person name="Yang L."/>
            <person name="Yang Q.S."/>
            <person name="Wu H."/>
            <person name="Pang Z.M."/>
            <person name="Xia F."/>
            <person name="Ying K."/>
            <person name="Mao Y.M."/>
            <person name="Xie Y."/>
        </authorList>
    </citation>
    <scope>NUCLEOTIDE SEQUENCE [MRNA] (ISOFORM 2)</scope>
    <scope>VARIANTS HIS-508 AND SER-586</scope>
</reference>
<reference key="2">
    <citation type="submission" date="2004-01" db="EMBL/GenBank/DDBJ databases">
        <title>SEREX-defined rhabdomyosarcoma antigens.</title>
        <authorList>
            <person name="Behrends U."/>
            <person name="Gotz C."/>
            <person name="Mautner J."/>
        </authorList>
    </citation>
    <scope>NUCLEOTIDE SEQUENCE [MRNA] (ISOFORM 1)</scope>
    <scope>VARIANTS HIS-508 AND SER-586</scope>
    <source>
        <tissue>Embryonic rhabdomyosarcoma</tissue>
    </source>
</reference>
<reference key="3">
    <citation type="journal article" date="2004" name="Nat. Genet.">
        <title>Complete sequencing and characterization of 21,243 full-length human cDNAs.</title>
        <authorList>
            <person name="Ota T."/>
            <person name="Suzuki Y."/>
            <person name="Nishikawa T."/>
            <person name="Otsuki T."/>
            <person name="Sugiyama T."/>
            <person name="Irie R."/>
            <person name="Wakamatsu A."/>
            <person name="Hayashi K."/>
            <person name="Sato H."/>
            <person name="Nagai K."/>
            <person name="Kimura K."/>
            <person name="Makita H."/>
            <person name="Sekine M."/>
            <person name="Obayashi M."/>
            <person name="Nishi T."/>
            <person name="Shibahara T."/>
            <person name="Tanaka T."/>
            <person name="Ishii S."/>
            <person name="Yamamoto J."/>
            <person name="Saito K."/>
            <person name="Kawai Y."/>
            <person name="Isono Y."/>
            <person name="Nakamura Y."/>
            <person name="Nagahari K."/>
            <person name="Murakami K."/>
            <person name="Yasuda T."/>
            <person name="Iwayanagi T."/>
            <person name="Wagatsuma M."/>
            <person name="Shiratori A."/>
            <person name="Sudo H."/>
            <person name="Hosoiri T."/>
            <person name="Kaku Y."/>
            <person name="Kodaira H."/>
            <person name="Kondo H."/>
            <person name="Sugawara M."/>
            <person name="Takahashi M."/>
            <person name="Kanda K."/>
            <person name="Yokoi T."/>
            <person name="Furuya T."/>
            <person name="Kikkawa E."/>
            <person name="Omura Y."/>
            <person name="Abe K."/>
            <person name="Kamihara K."/>
            <person name="Katsuta N."/>
            <person name="Sato K."/>
            <person name="Tanikawa M."/>
            <person name="Yamazaki M."/>
            <person name="Ninomiya K."/>
            <person name="Ishibashi T."/>
            <person name="Yamashita H."/>
            <person name="Murakawa K."/>
            <person name="Fujimori K."/>
            <person name="Tanai H."/>
            <person name="Kimata M."/>
            <person name="Watanabe M."/>
            <person name="Hiraoka S."/>
            <person name="Chiba Y."/>
            <person name="Ishida S."/>
            <person name="Ono Y."/>
            <person name="Takiguchi S."/>
            <person name="Watanabe S."/>
            <person name="Yosida M."/>
            <person name="Hotuta T."/>
            <person name="Kusano J."/>
            <person name="Kanehori K."/>
            <person name="Takahashi-Fujii A."/>
            <person name="Hara H."/>
            <person name="Tanase T.-O."/>
            <person name="Nomura Y."/>
            <person name="Togiya S."/>
            <person name="Komai F."/>
            <person name="Hara R."/>
            <person name="Takeuchi K."/>
            <person name="Arita M."/>
            <person name="Imose N."/>
            <person name="Musashino K."/>
            <person name="Yuuki H."/>
            <person name="Oshima A."/>
            <person name="Sasaki N."/>
            <person name="Aotsuka S."/>
            <person name="Yoshikawa Y."/>
            <person name="Matsunawa H."/>
            <person name="Ichihara T."/>
            <person name="Shiohata N."/>
            <person name="Sano S."/>
            <person name="Moriya S."/>
            <person name="Momiyama H."/>
            <person name="Satoh N."/>
            <person name="Takami S."/>
            <person name="Terashima Y."/>
            <person name="Suzuki O."/>
            <person name="Nakagawa S."/>
            <person name="Senoh A."/>
            <person name="Mizoguchi H."/>
            <person name="Goto Y."/>
            <person name="Shimizu F."/>
            <person name="Wakebe H."/>
            <person name="Hishigaki H."/>
            <person name="Watanabe T."/>
            <person name="Sugiyama A."/>
            <person name="Takemoto M."/>
            <person name="Kawakami B."/>
            <person name="Yamazaki M."/>
            <person name="Watanabe K."/>
            <person name="Kumagai A."/>
            <person name="Itakura S."/>
            <person name="Fukuzumi Y."/>
            <person name="Fujimori Y."/>
            <person name="Komiyama M."/>
            <person name="Tashiro H."/>
            <person name="Tanigami A."/>
            <person name="Fujiwara T."/>
            <person name="Ono T."/>
            <person name="Yamada K."/>
            <person name="Fujii Y."/>
            <person name="Ozaki K."/>
            <person name="Hirao M."/>
            <person name="Ohmori Y."/>
            <person name="Kawabata A."/>
            <person name="Hikiji T."/>
            <person name="Kobatake N."/>
            <person name="Inagaki H."/>
            <person name="Ikema Y."/>
            <person name="Okamoto S."/>
            <person name="Okitani R."/>
            <person name="Kawakami T."/>
            <person name="Noguchi S."/>
            <person name="Itoh T."/>
            <person name="Shigeta K."/>
            <person name="Senba T."/>
            <person name="Matsumura K."/>
            <person name="Nakajima Y."/>
            <person name="Mizuno T."/>
            <person name="Morinaga M."/>
            <person name="Sasaki M."/>
            <person name="Togashi T."/>
            <person name="Oyama M."/>
            <person name="Hata H."/>
            <person name="Watanabe M."/>
            <person name="Komatsu T."/>
            <person name="Mizushima-Sugano J."/>
            <person name="Satoh T."/>
            <person name="Shirai Y."/>
            <person name="Takahashi Y."/>
            <person name="Nakagawa K."/>
            <person name="Okumura K."/>
            <person name="Nagase T."/>
            <person name="Nomura N."/>
            <person name="Kikuchi H."/>
            <person name="Masuho Y."/>
            <person name="Yamashita R."/>
            <person name="Nakai K."/>
            <person name="Yada T."/>
            <person name="Nakamura Y."/>
            <person name="Ohara O."/>
            <person name="Isogai T."/>
            <person name="Sugano S."/>
        </authorList>
    </citation>
    <scope>NUCLEOTIDE SEQUENCE [LARGE SCALE MRNA] (ISOFORMS 1 AND 3)</scope>
    <scope>VARIANTS HIS-508 AND SER-586</scope>
    <source>
        <tissue>Colon</tissue>
        <tissue>Uterus</tissue>
    </source>
</reference>
<reference key="4">
    <citation type="journal article" date="2004" name="Nature">
        <title>The DNA sequence and comparative analysis of human chromosome 5.</title>
        <authorList>
            <person name="Schmutz J."/>
            <person name="Martin J."/>
            <person name="Terry A."/>
            <person name="Couronne O."/>
            <person name="Grimwood J."/>
            <person name="Lowry S."/>
            <person name="Gordon L.A."/>
            <person name="Scott D."/>
            <person name="Xie G."/>
            <person name="Huang W."/>
            <person name="Hellsten U."/>
            <person name="Tran-Gyamfi M."/>
            <person name="She X."/>
            <person name="Prabhakar S."/>
            <person name="Aerts A."/>
            <person name="Altherr M."/>
            <person name="Bajorek E."/>
            <person name="Black S."/>
            <person name="Branscomb E."/>
            <person name="Caoile C."/>
            <person name="Challacombe J.F."/>
            <person name="Chan Y.M."/>
            <person name="Denys M."/>
            <person name="Detter J.C."/>
            <person name="Escobar J."/>
            <person name="Flowers D."/>
            <person name="Fotopulos D."/>
            <person name="Glavina T."/>
            <person name="Gomez M."/>
            <person name="Gonzales E."/>
            <person name="Goodstein D."/>
            <person name="Grigoriev I."/>
            <person name="Groza M."/>
            <person name="Hammon N."/>
            <person name="Hawkins T."/>
            <person name="Haydu L."/>
            <person name="Israni S."/>
            <person name="Jett J."/>
            <person name="Kadner K."/>
            <person name="Kimball H."/>
            <person name="Kobayashi A."/>
            <person name="Lopez F."/>
            <person name="Lou Y."/>
            <person name="Martinez D."/>
            <person name="Medina C."/>
            <person name="Morgan J."/>
            <person name="Nandkeshwar R."/>
            <person name="Noonan J.P."/>
            <person name="Pitluck S."/>
            <person name="Pollard M."/>
            <person name="Predki P."/>
            <person name="Priest J."/>
            <person name="Ramirez L."/>
            <person name="Retterer J."/>
            <person name="Rodriguez A."/>
            <person name="Rogers S."/>
            <person name="Salamov A."/>
            <person name="Salazar A."/>
            <person name="Thayer N."/>
            <person name="Tice H."/>
            <person name="Tsai M."/>
            <person name="Ustaszewska A."/>
            <person name="Vo N."/>
            <person name="Wheeler J."/>
            <person name="Wu K."/>
            <person name="Yang J."/>
            <person name="Dickson M."/>
            <person name="Cheng J.-F."/>
            <person name="Eichler E.E."/>
            <person name="Olsen A."/>
            <person name="Pennacchio L.A."/>
            <person name="Rokhsar D.S."/>
            <person name="Richardson P."/>
            <person name="Lucas S.M."/>
            <person name="Myers R.M."/>
            <person name="Rubin E.M."/>
        </authorList>
    </citation>
    <scope>NUCLEOTIDE SEQUENCE [LARGE SCALE GENOMIC DNA]</scope>
</reference>
<reference key="5">
    <citation type="journal article" date="2004" name="Genome Res.">
        <title>The status, quality, and expansion of the NIH full-length cDNA project: the Mammalian Gene Collection (MGC).</title>
        <authorList>
            <consortium name="The MGC Project Team"/>
        </authorList>
    </citation>
    <scope>NUCLEOTIDE SEQUENCE [LARGE SCALE MRNA] (ISOFORM 1)</scope>
    <scope>VARIANTS HIS-508 AND SER-586</scope>
    <source>
        <tissue>Brain</tissue>
    </source>
</reference>
<reference key="6">
    <citation type="journal article" date="2007" name="J. Cell Biol.">
        <title>Spindly, a novel protein essential for silencing the spindle assembly checkpoint, recruits dynein to the kinetochore.</title>
        <authorList>
            <person name="Griffis E.R."/>
            <person name="Stuurman N."/>
            <person name="Vale R.D."/>
        </authorList>
    </citation>
    <scope>FUNCTION</scope>
    <scope>SUBCELLULAR LOCATION</scope>
</reference>
<reference key="7">
    <citation type="journal article" date="2007" name="Science">
        <title>ATM and ATR substrate analysis reveals extensive protein networks responsive to DNA damage.</title>
        <authorList>
            <person name="Matsuoka S."/>
            <person name="Ballif B.A."/>
            <person name="Smogorzewska A."/>
            <person name="McDonald E.R. III"/>
            <person name="Hurov K.E."/>
            <person name="Luo J."/>
            <person name="Bakalarski C.E."/>
            <person name="Zhao Z."/>
            <person name="Solimini N."/>
            <person name="Lerenthal Y."/>
            <person name="Shiloh Y."/>
            <person name="Gygi S.P."/>
            <person name="Elledge S.J."/>
        </authorList>
    </citation>
    <scope>IDENTIFICATION BY MASS SPECTROMETRY [LARGE SCALE ANALYSIS]</scope>
    <source>
        <tissue>Embryonic kidney</tissue>
    </source>
</reference>
<reference key="8">
    <citation type="journal article" date="2009" name="J. Cell Biol.">
        <title>Mitotic control of kinetochore-associated dynein and spindle orientation by human Spindly.</title>
        <authorList>
            <person name="Chan Y.W."/>
            <person name="Fava L.L."/>
            <person name="Uldschmid A."/>
            <person name="Schmitz M.H.A."/>
            <person name="Gerlich D.W."/>
            <person name="Nigg E.A."/>
            <person name="Santamaria A."/>
        </authorList>
    </citation>
    <scope>FUNCTION</scope>
    <scope>INTERACTION WITH KNTC1 AND ZW10</scope>
    <scope>SUBCELLULAR LOCATION</scope>
</reference>
<reference key="9">
    <citation type="journal article" date="2010" name="Sci. Signal.">
        <title>Quantitative phosphoproteomics reveals widespread full phosphorylation site occupancy during mitosis.</title>
        <authorList>
            <person name="Olsen J.V."/>
            <person name="Vermeulen M."/>
            <person name="Santamaria A."/>
            <person name="Kumar C."/>
            <person name="Miller M.L."/>
            <person name="Jensen L.J."/>
            <person name="Gnad F."/>
            <person name="Cox J."/>
            <person name="Jensen T.S."/>
            <person name="Nigg E.A."/>
            <person name="Brunak S."/>
            <person name="Mann M."/>
        </authorList>
    </citation>
    <scope>PHOSPHORYLATION [LARGE SCALE ANALYSIS] AT SER-513 AND SER-515</scope>
    <scope>VARIANT [LARGE SCALE ANALYSIS] HIS-508</scope>
    <scope>IDENTIFICATION BY MASS SPECTROMETRY [LARGE SCALE ANALYSIS]</scope>
    <source>
        <tissue>Cervix carcinoma</tissue>
    </source>
</reference>
<reference key="10">
    <citation type="journal article" date="2012" name="Proc. Natl. Acad. Sci. U.S.A.">
        <title>N-terminal acetylome analyses and functional insights of the N-terminal acetyltransferase NatB.</title>
        <authorList>
            <person name="Van Damme P."/>
            <person name="Lasa M."/>
            <person name="Polevoda B."/>
            <person name="Gazquez C."/>
            <person name="Elosegui-Artola A."/>
            <person name="Kim D.S."/>
            <person name="De Juan-Pardo E."/>
            <person name="Demeyer K."/>
            <person name="Hole K."/>
            <person name="Larrea E."/>
            <person name="Timmerman E."/>
            <person name="Prieto J."/>
            <person name="Arnesen T."/>
            <person name="Sherman F."/>
            <person name="Gevaert K."/>
            <person name="Aldabe R."/>
        </authorList>
    </citation>
    <scope>ACETYLATION [LARGE SCALE ANALYSIS] AT MET-1</scope>
    <scope>IDENTIFICATION BY MASS SPECTROMETRY [LARGE SCALE ANALYSIS]</scope>
</reference>
<reference key="11">
    <citation type="journal article" date="2013" name="J. Proteome Res.">
        <title>Toward a comprehensive characterization of a human cancer cell phosphoproteome.</title>
        <authorList>
            <person name="Zhou H."/>
            <person name="Di Palma S."/>
            <person name="Preisinger C."/>
            <person name="Peng M."/>
            <person name="Polat A.N."/>
            <person name="Heck A.J."/>
            <person name="Mohammed S."/>
        </authorList>
    </citation>
    <scope>PHOSPHORYLATION [LARGE SCALE ANALYSIS] AT SER-513 AND SER-515</scope>
    <scope>VARIANT [LARGE SCALE ANALYSIS] HIS-508</scope>
    <scope>IDENTIFICATION BY MASS SPECTROMETRY [LARGE SCALE ANALYSIS]</scope>
    <source>
        <tissue>Cervix carcinoma</tissue>
        <tissue>Erythroleukemia</tissue>
    </source>
</reference>
<reference key="12">
    <citation type="journal article" date="2014" name="Science">
        <title>Activation of cytoplasmic dynein motility by dynactin-cargo adapter complexes.</title>
        <authorList>
            <person name="McKenney R.J."/>
            <person name="Huynh W."/>
            <person name="Tanenbaum M.E."/>
            <person name="Bhabha G."/>
            <person name="Vale R.D."/>
        </authorList>
    </citation>
    <scope>FUNCTION</scope>
    <scope>INTERACTION WITH DYNEIN INTERMEDIATE CHAIN AND DCTN1</scope>
</reference>
<reference key="13">
    <citation type="journal article" date="2018" name="Sci. Rep.">
        <title>USP45 and Spindly are part of the same complex implicated in cell migration.</title>
        <authorList>
            <person name="Conte C."/>
            <person name="Griffis E.R."/>
            <person name="Hickson I."/>
            <person name="Perez-Oliva A.B."/>
        </authorList>
    </citation>
    <scope>FUNCTION</scope>
    <scope>INTERACTION WITH USP45</scope>
    <scope>UBIQUITINATION</scope>
    <scope>DEUBIQUITINATION BY USP45</scope>
</reference>
<reference key="14">
    <citation type="journal article" date="2006" name="Cell">
        <title>Global, in vivo, and site-specific phosphorylation dynamics in signaling networks.</title>
        <authorList>
            <person name="Olsen J.V."/>
            <person name="Blagoev B."/>
            <person name="Gnad F."/>
            <person name="Macek B."/>
            <person name="Kumar C."/>
            <person name="Mortensen P."/>
            <person name="Mann M."/>
        </authorList>
    </citation>
    <scope>VARIANT [LARGE SCALE ANALYSIS] HIS-508</scope>
    <scope>IDENTIFICATION BY MASS SPECTROMETRY [LARGE SCALE ANALYSIS]</scope>
    <source>
        <tissue>Cervix carcinoma</tissue>
    </source>
</reference>
<reference key="15">
    <citation type="journal article" date="2007" name="J. Proteome Res.">
        <title>Improved titanium dioxide enrichment of phosphopeptides from HeLa cells and high confident phosphopeptide identification by cross-validation of MS/MS and MS/MS/MS spectra.</title>
        <authorList>
            <person name="Yu L.R."/>
            <person name="Zhu Z."/>
            <person name="Chan K.C."/>
            <person name="Issaq H.J."/>
            <person name="Dimitrov D.S."/>
            <person name="Veenstra T.D."/>
        </authorList>
    </citation>
    <scope>VARIANT [LARGE SCALE ANALYSIS] HIS-508</scope>
    <scope>IDENTIFICATION BY MASS SPECTROMETRY [LARGE SCALE ANALYSIS]</scope>
    <source>
        <tissue>Cervix carcinoma</tissue>
    </source>
</reference>
<reference key="16">
    <citation type="journal article" date="2011" name="Sci. Signal.">
        <title>System-wide temporal characterization of the proteome and phosphoproteome of human embryonic stem cell differentiation.</title>
        <authorList>
            <person name="Rigbolt K.T."/>
            <person name="Prokhorova T.A."/>
            <person name="Akimov V."/>
            <person name="Henningsen J."/>
            <person name="Johansen P.T."/>
            <person name="Kratchmarova I."/>
            <person name="Kassem M."/>
            <person name="Mann M."/>
            <person name="Olsen J.V."/>
            <person name="Blagoev B."/>
        </authorList>
    </citation>
    <scope>VARIANT [LARGE SCALE ANALYSIS] HIS-508</scope>
    <scope>IDENTIFICATION BY MASS SPECTROMETRY [LARGE SCALE ANALYSIS]</scope>
</reference>
<organism>
    <name type="scientific">Homo sapiens</name>
    <name type="common">Human</name>
    <dbReference type="NCBI Taxonomy" id="9606"/>
    <lineage>
        <taxon>Eukaryota</taxon>
        <taxon>Metazoa</taxon>
        <taxon>Chordata</taxon>
        <taxon>Craniata</taxon>
        <taxon>Vertebrata</taxon>
        <taxon>Euteleostomi</taxon>
        <taxon>Mammalia</taxon>
        <taxon>Eutheria</taxon>
        <taxon>Euarchontoglires</taxon>
        <taxon>Primates</taxon>
        <taxon>Haplorrhini</taxon>
        <taxon>Catarrhini</taxon>
        <taxon>Hominidae</taxon>
        <taxon>Homo</taxon>
    </lineage>
</organism>
<gene>
    <name evidence="2" type="primary">SPDL1</name>
    <name evidence="2" type="synonym">CCDC99</name>
</gene>
<keyword id="KW-0002">3D-structure</keyword>
<keyword id="KW-0007">Acetylation</keyword>
<keyword id="KW-0025">Alternative splicing</keyword>
<keyword id="KW-0131">Cell cycle</keyword>
<keyword id="KW-0132">Cell division</keyword>
<keyword id="KW-0137">Centromere</keyword>
<keyword id="KW-0158">Chromosome</keyword>
<keyword id="KW-0175">Coiled coil</keyword>
<keyword id="KW-0963">Cytoplasm</keyword>
<keyword id="KW-0206">Cytoskeleton</keyword>
<keyword id="KW-0995">Kinetochore</keyword>
<keyword id="KW-0498">Mitosis</keyword>
<keyword id="KW-0539">Nucleus</keyword>
<keyword id="KW-0597">Phosphoprotein</keyword>
<keyword id="KW-1267">Proteomics identification</keyword>
<keyword id="KW-1185">Reference proteome</keyword>
<keyword id="KW-0832">Ubl conjugation</keyword>
<protein>
    <recommendedName>
        <fullName evidence="2">Protein Spindly</fullName>
        <shortName>hSpindly</shortName>
    </recommendedName>
    <alternativeName>
        <fullName>Arsenite-related gene 1 protein</fullName>
    </alternativeName>
    <alternativeName>
        <fullName evidence="2">Coiled-coil domain-containing protein 99</fullName>
    </alternativeName>
    <alternativeName>
        <fullName>Rhabdomyosarcoma antigen MU-RMS-40.4A</fullName>
    </alternativeName>
    <alternativeName>
        <fullName evidence="2">Spindle apparatus coiled-coil domain-containing protein 1</fullName>
    </alternativeName>
</protein>